<keyword id="KW-0021">Allosteric enzyme</keyword>
<keyword id="KW-0328">Glycosyltransferase</keyword>
<keyword id="KW-0342">GTP-binding</keyword>
<keyword id="KW-0460">Magnesium</keyword>
<keyword id="KW-0547">Nucleotide-binding</keyword>
<keyword id="KW-1185">Reference proteome</keyword>
<keyword id="KW-0808">Transferase</keyword>
<organism>
    <name type="scientific">Natranaerobius thermophilus (strain ATCC BAA-1301 / DSM 18059 / JW/NM-WN-LF)</name>
    <dbReference type="NCBI Taxonomy" id="457570"/>
    <lineage>
        <taxon>Bacteria</taxon>
        <taxon>Bacillati</taxon>
        <taxon>Bacillota</taxon>
        <taxon>Clostridia</taxon>
        <taxon>Natranaerobiales</taxon>
        <taxon>Natranaerobiaceae</taxon>
        <taxon>Natranaerobius</taxon>
    </lineage>
</organism>
<sequence>MSKLHVVDHPLIQHKLAFIRDKETGSKTFRELVNEVSMLMAYEVTRELQTEEYEVETPISTAKTRILSGKKLGLVPILRAGLGMVESVRNLIPAARVGHIGVYRDPETLQPVEYYCKLPQDIHERELIVLDPMLATGGSAKASIQFIKDRGGTNIRFMCINAAPEGVEELQKAHPDVDIWTCAVDEKLNEKAYIVPGLGDAGDRLFGTK</sequence>
<dbReference type="EC" id="2.4.2.9" evidence="1"/>
<dbReference type="EMBL" id="CP001034">
    <property type="protein sequence ID" value="ACB86404.1"/>
    <property type="molecule type" value="Genomic_DNA"/>
</dbReference>
<dbReference type="RefSeq" id="WP_012449236.1">
    <property type="nucleotide sequence ID" value="NC_010718.1"/>
</dbReference>
<dbReference type="SMR" id="B2A3H5"/>
<dbReference type="FunCoup" id="B2A3H5">
    <property type="interactions" value="368"/>
</dbReference>
<dbReference type="STRING" id="457570.Nther_2857"/>
<dbReference type="KEGG" id="nth:Nther_2857"/>
<dbReference type="eggNOG" id="COG0035">
    <property type="taxonomic scope" value="Bacteria"/>
</dbReference>
<dbReference type="HOGENOM" id="CLU_067096_2_2_9"/>
<dbReference type="InParanoid" id="B2A3H5"/>
<dbReference type="OrthoDB" id="9781675at2"/>
<dbReference type="UniPathway" id="UPA00574">
    <property type="reaction ID" value="UER00636"/>
</dbReference>
<dbReference type="Proteomes" id="UP000001683">
    <property type="component" value="Chromosome"/>
</dbReference>
<dbReference type="GO" id="GO:0005525">
    <property type="term" value="F:GTP binding"/>
    <property type="evidence" value="ECO:0007669"/>
    <property type="project" value="UniProtKB-KW"/>
</dbReference>
<dbReference type="GO" id="GO:0000287">
    <property type="term" value="F:magnesium ion binding"/>
    <property type="evidence" value="ECO:0007669"/>
    <property type="project" value="UniProtKB-UniRule"/>
</dbReference>
<dbReference type="GO" id="GO:0004845">
    <property type="term" value="F:uracil phosphoribosyltransferase activity"/>
    <property type="evidence" value="ECO:0007669"/>
    <property type="project" value="UniProtKB-UniRule"/>
</dbReference>
<dbReference type="GO" id="GO:0044206">
    <property type="term" value="P:UMP salvage"/>
    <property type="evidence" value="ECO:0007669"/>
    <property type="project" value="UniProtKB-UniRule"/>
</dbReference>
<dbReference type="GO" id="GO:0006223">
    <property type="term" value="P:uracil salvage"/>
    <property type="evidence" value="ECO:0007669"/>
    <property type="project" value="InterPro"/>
</dbReference>
<dbReference type="CDD" id="cd06223">
    <property type="entry name" value="PRTases_typeI"/>
    <property type="match status" value="1"/>
</dbReference>
<dbReference type="FunFam" id="3.40.50.2020:FF:000003">
    <property type="entry name" value="Uracil phosphoribosyltransferase"/>
    <property type="match status" value="1"/>
</dbReference>
<dbReference type="Gene3D" id="3.40.50.2020">
    <property type="match status" value="1"/>
</dbReference>
<dbReference type="HAMAP" id="MF_01218_B">
    <property type="entry name" value="Upp_B"/>
    <property type="match status" value="1"/>
</dbReference>
<dbReference type="InterPro" id="IPR000836">
    <property type="entry name" value="PRibTrfase_dom"/>
</dbReference>
<dbReference type="InterPro" id="IPR029057">
    <property type="entry name" value="PRTase-like"/>
</dbReference>
<dbReference type="InterPro" id="IPR034332">
    <property type="entry name" value="Upp_B"/>
</dbReference>
<dbReference type="InterPro" id="IPR050054">
    <property type="entry name" value="UPRTase/APRTase"/>
</dbReference>
<dbReference type="InterPro" id="IPR005765">
    <property type="entry name" value="Ura_phspho_trans"/>
</dbReference>
<dbReference type="NCBIfam" id="NF001097">
    <property type="entry name" value="PRK00129.1"/>
    <property type="match status" value="1"/>
</dbReference>
<dbReference type="NCBIfam" id="TIGR01091">
    <property type="entry name" value="upp"/>
    <property type="match status" value="1"/>
</dbReference>
<dbReference type="PANTHER" id="PTHR32315">
    <property type="entry name" value="ADENINE PHOSPHORIBOSYLTRANSFERASE"/>
    <property type="match status" value="1"/>
</dbReference>
<dbReference type="PANTHER" id="PTHR32315:SF4">
    <property type="entry name" value="URACIL PHOSPHORIBOSYLTRANSFERASE, CHLOROPLASTIC"/>
    <property type="match status" value="1"/>
</dbReference>
<dbReference type="Pfam" id="PF14681">
    <property type="entry name" value="UPRTase"/>
    <property type="match status" value="1"/>
</dbReference>
<dbReference type="SUPFAM" id="SSF53271">
    <property type="entry name" value="PRTase-like"/>
    <property type="match status" value="1"/>
</dbReference>
<gene>
    <name evidence="1" type="primary">upp</name>
    <name type="ordered locus">Nther_2857</name>
</gene>
<name>UPP_NATTJ</name>
<comment type="function">
    <text evidence="1">Catalyzes the conversion of uracil and 5-phospho-alpha-D-ribose 1-diphosphate (PRPP) to UMP and diphosphate.</text>
</comment>
<comment type="catalytic activity">
    <reaction evidence="1">
        <text>UMP + diphosphate = 5-phospho-alpha-D-ribose 1-diphosphate + uracil</text>
        <dbReference type="Rhea" id="RHEA:13017"/>
        <dbReference type="ChEBI" id="CHEBI:17568"/>
        <dbReference type="ChEBI" id="CHEBI:33019"/>
        <dbReference type="ChEBI" id="CHEBI:57865"/>
        <dbReference type="ChEBI" id="CHEBI:58017"/>
        <dbReference type="EC" id="2.4.2.9"/>
    </reaction>
</comment>
<comment type="cofactor">
    <cofactor evidence="1">
        <name>Mg(2+)</name>
        <dbReference type="ChEBI" id="CHEBI:18420"/>
    </cofactor>
    <text evidence="1">Binds 1 Mg(2+) ion per subunit. The magnesium is bound as Mg-PRPP.</text>
</comment>
<comment type="activity regulation">
    <text evidence="1">Allosterically activated by GTP.</text>
</comment>
<comment type="pathway">
    <text evidence="1">Pyrimidine metabolism; UMP biosynthesis via salvage pathway; UMP from uracil: step 1/1.</text>
</comment>
<comment type="similarity">
    <text evidence="1">Belongs to the UPRTase family.</text>
</comment>
<accession>B2A3H5</accession>
<proteinExistence type="inferred from homology"/>
<reference key="1">
    <citation type="submission" date="2008-04" db="EMBL/GenBank/DDBJ databases">
        <title>Complete sequence of chromosome of Natranaerobius thermophilus JW/NM-WN-LF.</title>
        <authorList>
            <consortium name="US DOE Joint Genome Institute"/>
            <person name="Copeland A."/>
            <person name="Lucas S."/>
            <person name="Lapidus A."/>
            <person name="Glavina del Rio T."/>
            <person name="Dalin E."/>
            <person name="Tice H."/>
            <person name="Bruce D."/>
            <person name="Goodwin L."/>
            <person name="Pitluck S."/>
            <person name="Chertkov O."/>
            <person name="Brettin T."/>
            <person name="Detter J.C."/>
            <person name="Han C."/>
            <person name="Kuske C.R."/>
            <person name="Schmutz J."/>
            <person name="Larimer F."/>
            <person name="Land M."/>
            <person name="Hauser L."/>
            <person name="Kyrpides N."/>
            <person name="Lykidis A."/>
            <person name="Mesbah N.M."/>
            <person name="Wiegel J."/>
        </authorList>
    </citation>
    <scope>NUCLEOTIDE SEQUENCE [LARGE SCALE GENOMIC DNA]</scope>
    <source>
        <strain>ATCC BAA-1301 / DSM 18059 / JW/NM-WN-LF</strain>
    </source>
</reference>
<evidence type="ECO:0000255" key="1">
    <source>
        <dbReference type="HAMAP-Rule" id="MF_01218"/>
    </source>
</evidence>
<feature type="chain" id="PRO_1000139145" description="Uracil phosphoribosyltransferase">
    <location>
        <begin position="1"/>
        <end position="209"/>
    </location>
</feature>
<feature type="binding site" evidence="1">
    <location>
        <position position="79"/>
    </location>
    <ligand>
        <name>5-phospho-alpha-D-ribose 1-diphosphate</name>
        <dbReference type="ChEBI" id="CHEBI:58017"/>
    </ligand>
</feature>
<feature type="binding site" evidence="1">
    <location>
        <position position="104"/>
    </location>
    <ligand>
        <name>5-phospho-alpha-D-ribose 1-diphosphate</name>
        <dbReference type="ChEBI" id="CHEBI:58017"/>
    </ligand>
</feature>
<feature type="binding site" evidence="1">
    <location>
        <begin position="131"/>
        <end position="139"/>
    </location>
    <ligand>
        <name>5-phospho-alpha-D-ribose 1-diphosphate</name>
        <dbReference type="ChEBI" id="CHEBI:58017"/>
    </ligand>
</feature>
<feature type="binding site" evidence="1">
    <location>
        <position position="194"/>
    </location>
    <ligand>
        <name>uracil</name>
        <dbReference type="ChEBI" id="CHEBI:17568"/>
    </ligand>
</feature>
<feature type="binding site" evidence="1">
    <location>
        <begin position="199"/>
        <end position="201"/>
    </location>
    <ligand>
        <name>uracil</name>
        <dbReference type="ChEBI" id="CHEBI:17568"/>
    </ligand>
</feature>
<feature type="binding site" evidence="1">
    <location>
        <position position="200"/>
    </location>
    <ligand>
        <name>5-phospho-alpha-D-ribose 1-diphosphate</name>
        <dbReference type="ChEBI" id="CHEBI:58017"/>
    </ligand>
</feature>
<protein>
    <recommendedName>
        <fullName evidence="1">Uracil phosphoribosyltransferase</fullName>
        <ecNumber evidence="1">2.4.2.9</ecNumber>
    </recommendedName>
    <alternativeName>
        <fullName evidence="1">UMP pyrophosphorylase</fullName>
    </alternativeName>
    <alternativeName>
        <fullName evidence="1">UPRTase</fullName>
    </alternativeName>
</protein>